<feature type="chain" id="PRO_0000414544" description="Release factor glutamine methyltransferase">
    <location>
        <begin position="1"/>
        <end position="279"/>
    </location>
</feature>
<feature type="binding site" evidence="1">
    <location>
        <begin position="118"/>
        <end position="122"/>
    </location>
    <ligand>
        <name>S-adenosyl-L-methionine</name>
        <dbReference type="ChEBI" id="CHEBI:59789"/>
    </ligand>
</feature>
<feature type="binding site" evidence="1">
    <location>
        <position position="141"/>
    </location>
    <ligand>
        <name>S-adenosyl-L-methionine</name>
        <dbReference type="ChEBI" id="CHEBI:59789"/>
    </ligand>
</feature>
<feature type="binding site" evidence="1">
    <location>
        <begin position="182"/>
        <end position="185"/>
    </location>
    <ligand>
        <name>substrate</name>
    </ligand>
</feature>
<feature type="binding site" evidence="1">
    <location>
        <position position="182"/>
    </location>
    <ligand>
        <name>S-adenosyl-L-methionine</name>
        <dbReference type="ChEBI" id="CHEBI:59789"/>
    </ligand>
</feature>
<evidence type="ECO:0000255" key="1">
    <source>
        <dbReference type="HAMAP-Rule" id="MF_02126"/>
    </source>
</evidence>
<reference key="1">
    <citation type="journal article" date="2001" name="J. Bacteriol.">
        <title>Genome of the bacterium Streptococcus pneumoniae strain R6.</title>
        <authorList>
            <person name="Hoskins J."/>
            <person name="Alborn W.E. Jr."/>
            <person name="Arnold J."/>
            <person name="Blaszczak L.C."/>
            <person name="Burgett S."/>
            <person name="DeHoff B.S."/>
            <person name="Estrem S.T."/>
            <person name="Fritz L."/>
            <person name="Fu D.-J."/>
            <person name="Fuller W."/>
            <person name="Geringer C."/>
            <person name="Gilmour R."/>
            <person name="Glass J.S."/>
            <person name="Khoja H."/>
            <person name="Kraft A.R."/>
            <person name="Lagace R.E."/>
            <person name="LeBlanc D.J."/>
            <person name="Lee L.N."/>
            <person name="Lefkowitz E.J."/>
            <person name="Lu J."/>
            <person name="Matsushima P."/>
            <person name="McAhren S.M."/>
            <person name="McHenney M."/>
            <person name="McLeaster K."/>
            <person name="Mundy C.W."/>
            <person name="Nicas T.I."/>
            <person name="Norris F.H."/>
            <person name="O'Gara M."/>
            <person name="Peery R.B."/>
            <person name="Robertson G.T."/>
            <person name="Rockey P."/>
            <person name="Sun P.-M."/>
            <person name="Winkler M.E."/>
            <person name="Yang Y."/>
            <person name="Young-Bellido M."/>
            <person name="Zhao G."/>
            <person name="Zook C.A."/>
            <person name="Baltz R.H."/>
            <person name="Jaskunas S.R."/>
            <person name="Rosteck P.R. Jr."/>
            <person name="Skatrud P.L."/>
            <person name="Glass J.I."/>
        </authorList>
    </citation>
    <scope>NUCLEOTIDE SEQUENCE [LARGE SCALE GENOMIC DNA]</scope>
    <source>
        <strain>ATCC BAA-255 / R6</strain>
    </source>
</reference>
<accession>Q8DPZ3</accession>
<sequence length="279" mass="31851">MKLAQLFSNFEEELIRQGEEAESLSFVYRSLKNLSFTDFIFALQQEVTTEEEKQFVEDIYQQLAAHKPAQYIIGQADFYGMHLKVDERVLIPRPETEELVELILTENLETNLSVLDIGTGSGAIALALAKNRPDWSVTAADISQEALDLARENAKNQNLQIFLKKSDCFTEISEKYDIIVSNPPYISREDESEVGLNVLYSEPHLALFADEDGLAIYRRIAEDATDYLKDSGKIYLEIGYKQGQCVPELFRKHLPEKRVRTLKDQFGQNRMVVVDDGQD</sequence>
<gene>
    <name evidence="1" type="primary">prmC</name>
    <name type="synonym">hemK</name>
    <name type="ordered locus">spr0925</name>
</gene>
<proteinExistence type="inferred from homology"/>
<organism>
    <name type="scientific">Streptococcus pneumoniae (strain ATCC BAA-255 / R6)</name>
    <dbReference type="NCBI Taxonomy" id="171101"/>
    <lineage>
        <taxon>Bacteria</taxon>
        <taxon>Bacillati</taxon>
        <taxon>Bacillota</taxon>
        <taxon>Bacilli</taxon>
        <taxon>Lactobacillales</taxon>
        <taxon>Streptococcaceae</taxon>
        <taxon>Streptococcus</taxon>
    </lineage>
</organism>
<protein>
    <recommendedName>
        <fullName evidence="1">Release factor glutamine methyltransferase</fullName>
        <shortName evidence="1">RF MTase</shortName>
        <ecNumber evidence="1">2.1.1.297</ecNumber>
    </recommendedName>
    <alternativeName>
        <fullName evidence="1">N5-glutamine methyltransferase PrmC</fullName>
    </alternativeName>
    <alternativeName>
        <fullName evidence="1">Protein-(glutamine-N5) MTase PrmC</fullName>
    </alternativeName>
    <alternativeName>
        <fullName evidence="1">Protein-glutamine N-methyltransferase PrmC</fullName>
    </alternativeName>
</protein>
<name>PRMC_STRR6</name>
<keyword id="KW-0489">Methyltransferase</keyword>
<keyword id="KW-1185">Reference proteome</keyword>
<keyword id="KW-0949">S-adenosyl-L-methionine</keyword>
<keyword id="KW-0808">Transferase</keyword>
<dbReference type="EC" id="2.1.1.297" evidence="1"/>
<dbReference type="EMBL" id="AE007317">
    <property type="protein sequence ID" value="AAK99729.1"/>
    <property type="molecule type" value="Genomic_DNA"/>
</dbReference>
<dbReference type="PIR" id="E97987">
    <property type="entry name" value="E97987"/>
</dbReference>
<dbReference type="RefSeq" id="NP_358519.1">
    <property type="nucleotide sequence ID" value="NC_003098.1"/>
</dbReference>
<dbReference type="RefSeq" id="WP_000761896.1">
    <property type="nucleotide sequence ID" value="NC_003098.1"/>
</dbReference>
<dbReference type="SMR" id="Q8DPZ3"/>
<dbReference type="STRING" id="171101.spr0925"/>
<dbReference type="KEGG" id="spr:spr0925"/>
<dbReference type="PATRIC" id="fig|171101.6.peg.1012"/>
<dbReference type="eggNOG" id="COG2890">
    <property type="taxonomic scope" value="Bacteria"/>
</dbReference>
<dbReference type="HOGENOM" id="CLU_018398_3_2_9"/>
<dbReference type="Proteomes" id="UP000000586">
    <property type="component" value="Chromosome"/>
</dbReference>
<dbReference type="GO" id="GO:0003676">
    <property type="term" value="F:nucleic acid binding"/>
    <property type="evidence" value="ECO:0007669"/>
    <property type="project" value="InterPro"/>
</dbReference>
<dbReference type="GO" id="GO:0102559">
    <property type="term" value="F:protein-(glutamine-N5) methyltransferase activity"/>
    <property type="evidence" value="ECO:0007669"/>
    <property type="project" value="UniProtKB-EC"/>
</dbReference>
<dbReference type="GO" id="GO:0036009">
    <property type="term" value="F:protein-glutamine N-methyltransferase activity"/>
    <property type="evidence" value="ECO:0000318"/>
    <property type="project" value="GO_Central"/>
</dbReference>
<dbReference type="GO" id="GO:0032259">
    <property type="term" value="P:methylation"/>
    <property type="evidence" value="ECO:0007669"/>
    <property type="project" value="UniProtKB-KW"/>
</dbReference>
<dbReference type="GO" id="GO:0006415">
    <property type="term" value="P:translational termination"/>
    <property type="evidence" value="ECO:0000318"/>
    <property type="project" value="GO_Central"/>
</dbReference>
<dbReference type="CDD" id="cd02440">
    <property type="entry name" value="AdoMet_MTases"/>
    <property type="match status" value="1"/>
</dbReference>
<dbReference type="Gene3D" id="1.10.8.10">
    <property type="entry name" value="DNA helicase RuvA subunit, C-terminal domain"/>
    <property type="match status" value="1"/>
</dbReference>
<dbReference type="Gene3D" id="3.40.50.150">
    <property type="entry name" value="Vaccinia Virus protein VP39"/>
    <property type="match status" value="1"/>
</dbReference>
<dbReference type="HAMAP" id="MF_02126">
    <property type="entry name" value="RF_methyltr_PrmC"/>
    <property type="match status" value="1"/>
</dbReference>
<dbReference type="InterPro" id="IPR002052">
    <property type="entry name" value="DNA_methylase_N6_adenine_CS"/>
</dbReference>
<dbReference type="InterPro" id="IPR004556">
    <property type="entry name" value="HemK-like"/>
</dbReference>
<dbReference type="InterPro" id="IPR050320">
    <property type="entry name" value="N5-glutamine_MTase"/>
</dbReference>
<dbReference type="InterPro" id="IPR040758">
    <property type="entry name" value="PrmC_N"/>
</dbReference>
<dbReference type="InterPro" id="IPR019874">
    <property type="entry name" value="RF_methyltr_PrmC"/>
</dbReference>
<dbReference type="InterPro" id="IPR029063">
    <property type="entry name" value="SAM-dependent_MTases_sf"/>
</dbReference>
<dbReference type="InterPro" id="IPR007848">
    <property type="entry name" value="Small_mtfrase_dom"/>
</dbReference>
<dbReference type="NCBIfam" id="TIGR00536">
    <property type="entry name" value="hemK_fam"/>
    <property type="match status" value="1"/>
</dbReference>
<dbReference type="NCBIfam" id="TIGR03534">
    <property type="entry name" value="RF_mod_PrmC"/>
    <property type="match status" value="1"/>
</dbReference>
<dbReference type="PANTHER" id="PTHR18895">
    <property type="entry name" value="HEMK METHYLTRANSFERASE"/>
    <property type="match status" value="1"/>
</dbReference>
<dbReference type="PANTHER" id="PTHR18895:SF74">
    <property type="entry name" value="MTRF1L RELEASE FACTOR GLUTAMINE METHYLTRANSFERASE"/>
    <property type="match status" value="1"/>
</dbReference>
<dbReference type="Pfam" id="PF05175">
    <property type="entry name" value="MTS"/>
    <property type="match status" value="1"/>
</dbReference>
<dbReference type="Pfam" id="PF17827">
    <property type="entry name" value="PrmC_N"/>
    <property type="match status" value="1"/>
</dbReference>
<dbReference type="SUPFAM" id="SSF53335">
    <property type="entry name" value="S-adenosyl-L-methionine-dependent methyltransferases"/>
    <property type="match status" value="1"/>
</dbReference>
<comment type="function">
    <text evidence="1">Methylates the class 1 translation termination release factors RF1/PrfA and RF2/PrfB on the glutamine residue of the universally conserved GGQ motif.</text>
</comment>
<comment type="catalytic activity">
    <reaction evidence="1">
        <text>L-glutaminyl-[peptide chain release factor] + S-adenosyl-L-methionine = N(5)-methyl-L-glutaminyl-[peptide chain release factor] + S-adenosyl-L-homocysteine + H(+)</text>
        <dbReference type="Rhea" id="RHEA:42896"/>
        <dbReference type="Rhea" id="RHEA-COMP:10271"/>
        <dbReference type="Rhea" id="RHEA-COMP:10272"/>
        <dbReference type="ChEBI" id="CHEBI:15378"/>
        <dbReference type="ChEBI" id="CHEBI:30011"/>
        <dbReference type="ChEBI" id="CHEBI:57856"/>
        <dbReference type="ChEBI" id="CHEBI:59789"/>
        <dbReference type="ChEBI" id="CHEBI:61891"/>
        <dbReference type="EC" id="2.1.1.297"/>
    </reaction>
</comment>
<comment type="similarity">
    <text evidence="1">Belongs to the protein N5-glutamine methyltransferase family. PrmC subfamily.</text>
</comment>